<keyword id="KW-0903">Direct protein sequencing</keyword>
<keyword id="KW-0687">Ribonucleoprotein</keyword>
<keyword id="KW-0689">Ribosomal protein</keyword>
<dbReference type="PIR" id="S11203">
    <property type="entry name" value="S11203"/>
</dbReference>
<dbReference type="SMR" id="P05391"/>
<dbReference type="GO" id="GO:1990904">
    <property type="term" value="C:ribonucleoprotein complex"/>
    <property type="evidence" value="ECO:0007669"/>
    <property type="project" value="UniProtKB-KW"/>
</dbReference>
<dbReference type="GO" id="GO:0005840">
    <property type="term" value="C:ribosome"/>
    <property type="evidence" value="ECO:0007669"/>
    <property type="project" value="UniProtKB-KW"/>
</dbReference>
<dbReference type="GO" id="GO:0003735">
    <property type="term" value="F:structural constituent of ribosome"/>
    <property type="evidence" value="ECO:0007669"/>
    <property type="project" value="InterPro"/>
</dbReference>
<dbReference type="GO" id="GO:0006412">
    <property type="term" value="P:translation"/>
    <property type="evidence" value="ECO:0007669"/>
    <property type="project" value="InterPro"/>
</dbReference>
<dbReference type="Gene3D" id="1.20.5.710">
    <property type="entry name" value="Single helix bin"/>
    <property type="match status" value="1"/>
</dbReference>
<dbReference type="InterPro" id="IPR008932">
    <property type="entry name" value="Ribosomal_bL12_oligo"/>
</dbReference>
<dbReference type="InterPro" id="IPR036235">
    <property type="entry name" value="Ribosomal_bL12_oligo_N_sf"/>
</dbReference>
<dbReference type="Pfam" id="PF16320">
    <property type="entry name" value="Ribosomal_L12_N"/>
    <property type="match status" value="1"/>
</dbReference>
<dbReference type="SUPFAM" id="SSF48300">
    <property type="entry name" value="Ribosomal protein L7/12, oligomerisation (N-terminal) domain"/>
    <property type="match status" value="1"/>
</dbReference>
<comment type="function">
    <text evidence="1">Forms part of the ribosomal stalk which helps the ribosome interact with GTP-bound translation factors. Is thus essential for accurate translation (By similarity).</text>
</comment>
<comment type="subunit">
    <text evidence="1">Homodimer. Part of the ribosomal stalk of the 50S ribosomal subunit. Forms a multimeric L10(L12)X complex, where L10 forms an elongated spine to which 2 to 4 L12 dimers bind in a sequential fashion. Binds GTP-bound translation factors (By similarity).</text>
</comment>
<comment type="similarity">
    <text evidence="2">Belongs to the bacterial ribosomal protein bL12 family.</text>
</comment>
<name>RL7_ARTGL</name>
<reference key="1">
    <citation type="journal article" date="1979" name="Can. J. Biochem.">
        <title>Structural homologies in alanine-rich acidic ribosomal proteins from procaryotes and eucaryotes.</title>
        <authorList>
            <person name="Visentin L.P."/>
            <person name="Yaguchi M."/>
            <person name="Matheson A.T."/>
        </authorList>
    </citation>
    <scope>PROTEIN SEQUENCE</scope>
</reference>
<sequence length="39" mass="4272">AKLSTEDLLEQFKGLTLIELSEFVKAFEETFEVGAAAPV</sequence>
<evidence type="ECO:0000250" key="1"/>
<evidence type="ECO:0000305" key="2"/>
<proteinExistence type="evidence at protein level"/>
<protein>
    <recommendedName>
        <fullName evidence="2">Large ribosomal subunit protein bL12</fullName>
    </recommendedName>
    <alternativeName>
        <fullName>50S ribosomal protein L7/L12</fullName>
    </alternativeName>
</protein>
<gene>
    <name type="primary">rplL</name>
</gene>
<feature type="chain" id="PRO_0000157502" description="Large ribosomal subunit protein bL12">
    <location>
        <begin position="1"/>
        <end position="39" status="greater than"/>
    </location>
</feature>
<feature type="non-terminal residue">
    <location>
        <position position="39"/>
    </location>
</feature>
<accession>P05391</accession>
<organism>
    <name type="scientific">Arthrobacter glacialis</name>
    <dbReference type="NCBI Taxonomy" id="1664"/>
    <lineage>
        <taxon>Bacteria</taxon>
        <taxon>Bacillati</taxon>
        <taxon>Actinomycetota</taxon>
        <taxon>Actinomycetes</taxon>
        <taxon>Micrococcales</taxon>
        <taxon>Micrococcaceae</taxon>
        <taxon>Arthrobacter</taxon>
    </lineage>
</organism>